<name>RS15_BRUAB</name>
<gene>
    <name evidence="1" type="primary">rpsO</name>
    <name type="ordered locus">BruAb1_2141</name>
</gene>
<feature type="chain" id="PRO_0000115398" description="Small ribosomal subunit protein uS15">
    <location>
        <begin position="1"/>
        <end position="89"/>
    </location>
</feature>
<dbReference type="EMBL" id="AE017223">
    <property type="protein sequence ID" value="AAX75437.1"/>
    <property type="molecule type" value="Genomic_DNA"/>
</dbReference>
<dbReference type="RefSeq" id="WP_002965230.1">
    <property type="nucleotide sequence ID" value="NC_006932.1"/>
</dbReference>
<dbReference type="SMR" id="P0C0Z5"/>
<dbReference type="EnsemblBacteria" id="AAX75437">
    <property type="protein sequence ID" value="AAX75437"/>
    <property type="gene ID" value="BruAb1_2141"/>
</dbReference>
<dbReference type="GeneID" id="97534579"/>
<dbReference type="KEGG" id="bmb:BruAb1_2141"/>
<dbReference type="HOGENOM" id="CLU_148518_0_0_5"/>
<dbReference type="Proteomes" id="UP000000540">
    <property type="component" value="Chromosome I"/>
</dbReference>
<dbReference type="GO" id="GO:0022627">
    <property type="term" value="C:cytosolic small ribosomal subunit"/>
    <property type="evidence" value="ECO:0007669"/>
    <property type="project" value="TreeGrafter"/>
</dbReference>
<dbReference type="GO" id="GO:0019843">
    <property type="term" value="F:rRNA binding"/>
    <property type="evidence" value="ECO:0007669"/>
    <property type="project" value="UniProtKB-UniRule"/>
</dbReference>
<dbReference type="GO" id="GO:0003735">
    <property type="term" value="F:structural constituent of ribosome"/>
    <property type="evidence" value="ECO:0007669"/>
    <property type="project" value="InterPro"/>
</dbReference>
<dbReference type="GO" id="GO:0006412">
    <property type="term" value="P:translation"/>
    <property type="evidence" value="ECO:0007669"/>
    <property type="project" value="UniProtKB-UniRule"/>
</dbReference>
<dbReference type="CDD" id="cd00353">
    <property type="entry name" value="Ribosomal_S15p_S13e"/>
    <property type="match status" value="1"/>
</dbReference>
<dbReference type="FunFam" id="1.10.287.10:FF:000002">
    <property type="entry name" value="30S ribosomal protein S15"/>
    <property type="match status" value="1"/>
</dbReference>
<dbReference type="Gene3D" id="6.10.250.3130">
    <property type="match status" value="1"/>
</dbReference>
<dbReference type="Gene3D" id="1.10.287.10">
    <property type="entry name" value="S15/NS1, RNA-binding"/>
    <property type="match status" value="1"/>
</dbReference>
<dbReference type="HAMAP" id="MF_01343_B">
    <property type="entry name" value="Ribosomal_uS15_B"/>
    <property type="match status" value="1"/>
</dbReference>
<dbReference type="InterPro" id="IPR000589">
    <property type="entry name" value="Ribosomal_uS15"/>
</dbReference>
<dbReference type="InterPro" id="IPR005290">
    <property type="entry name" value="Ribosomal_uS15_bac-type"/>
</dbReference>
<dbReference type="InterPro" id="IPR009068">
    <property type="entry name" value="uS15_NS1_RNA-bd_sf"/>
</dbReference>
<dbReference type="NCBIfam" id="TIGR00952">
    <property type="entry name" value="S15_bact"/>
    <property type="match status" value="1"/>
</dbReference>
<dbReference type="PANTHER" id="PTHR23321">
    <property type="entry name" value="RIBOSOMAL PROTEIN S15, BACTERIAL AND ORGANELLAR"/>
    <property type="match status" value="1"/>
</dbReference>
<dbReference type="PANTHER" id="PTHR23321:SF26">
    <property type="entry name" value="SMALL RIBOSOMAL SUBUNIT PROTEIN US15M"/>
    <property type="match status" value="1"/>
</dbReference>
<dbReference type="Pfam" id="PF00312">
    <property type="entry name" value="Ribosomal_S15"/>
    <property type="match status" value="1"/>
</dbReference>
<dbReference type="SMART" id="SM01387">
    <property type="entry name" value="Ribosomal_S15"/>
    <property type="match status" value="1"/>
</dbReference>
<dbReference type="SUPFAM" id="SSF47060">
    <property type="entry name" value="S15/NS1 RNA-binding domain"/>
    <property type="match status" value="1"/>
</dbReference>
<dbReference type="PROSITE" id="PS00362">
    <property type="entry name" value="RIBOSOMAL_S15"/>
    <property type="match status" value="1"/>
</dbReference>
<keyword id="KW-0687">Ribonucleoprotein</keyword>
<keyword id="KW-0689">Ribosomal protein</keyword>
<keyword id="KW-0694">RNA-binding</keyword>
<keyword id="KW-0699">rRNA-binding</keyword>
<proteinExistence type="inferred from homology"/>
<reference key="1">
    <citation type="journal article" date="2005" name="J. Bacteriol.">
        <title>Completion of the genome sequence of Brucella abortus and comparison to the highly similar genomes of Brucella melitensis and Brucella suis.</title>
        <authorList>
            <person name="Halling S.M."/>
            <person name="Peterson-Burch B.D."/>
            <person name="Bricker B.J."/>
            <person name="Zuerner R.L."/>
            <person name="Qing Z."/>
            <person name="Li L.-L."/>
            <person name="Kapur V."/>
            <person name="Alt D.P."/>
            <person name="Olsen S.C."/>
        </authorList>
    </citation>
    <scope>NUCLEOTIDE SEQUENCE [LARGE SCALE GENOMIC DNA]</scope>
    <source>
        <strain>9-941</strain>
    </source>
</reference>
<sequence>MSITAERKQALIKEYATKEGDTGSPEVQVAVLSERIANLTEHFKGHKNDNHSRRGLLKLVSQRRRLLDYVKGVDHARYQALITRLGLRR</sequence>
<organism>
    <name type="scientific">Brucella abortus biovar 1 (strain 9-941)</name>
    <dbReference type="NCBI Taxonomy" id="262698"/>
    <lineage>
        <taxon>Bacteria</taxon>
        <taxon>Pseudomonadati</taxon>
        <taxon>Pseudomonadota</taxon>
        <taxon>Alphaproteobacteria</taxon>
        <taxon>Hyphomicrobiales</taxon>
        <taxon>Brucellaceae</taxon>
        <taxon>Brucella/Ochrobactrum group</taxon>
        <taxon>Brucella</taxon>
    </lineage>
</organism>
<comment type="function">
    <text evidence="1">One of the primary rRNA binding proteins, it binds directly to 16S rRNA where it helps nucleate assembly of the platform of the 30S subunit by binding and bridging several RNA helices of the 16S rRNA.</text>
</comment>
<comment type="function">
    <text evidence="1">Forms an intersubunit bridge (bridge B4) with the 23S rRNA of the 50S subunit in the ribosome.</text>
</comment>
<comment type="subunit">
    <text evidence="1">Part of the 30S ribosomal subunit. Forms a bridge to the 50S subunit in the 70S ribosome, contacting the 23S rRNA.</text>
</comment>
<comment type="similarity">
    <text evidence="1">Belongs to the universal ribosomal protein uS15 family.</text>
</comment>
<protein>
    <recommendedName>
        <fullName evidence="1">Small ribosomal subunit protein uS15</fullName>
    </recommendedName>
    <alternativeName>
        <fullName evidence="2">30S ribosomal protein S15</fullName>
    </alternativeName>
</protein>
<accession>P0C0Z5</accession>
<accession>Q57A97</accession>
<evidence type="ECO:0000255" key="1">
    <source>
        <dbReference type="HAMAP-Rule" id="MF_01343"/>
    </source>
</evidence>
<evidence type="ECO:0000305" key="2"/>